<protein>
    <recommendedName>
        <fullName>Copper-exporting P-type ATPase</fullName>
        <ecNumber>7.2.2.8</ecNumber>
    </recommendedName>
    <alternativeName>
        <fullName>Copper-exporting P-type ATPase A</fullName>
    </alternativeName>
    <alternativeName>
        <fullName>Cu(+)-exporting ATPase</fullName>
    </alternativeName>
</protein>
<accession>Q5HCZ3</accession>
<keyword id="KW-0067">ATP-binding</keyword>
<keyword id="KW-1003">Cell membrane</keyword>
<keyword id="KW-0186">Copper</keyword>
<keyword id="KW-0187">Copper transport</keyword>
<keyword id="KW-0406">Ion transport</keyword>
<keyword id="KW-0460">Magnesium</keyword>
<keyword id="KW-0472">Membrane</keyword>
<keyword id="KW-0479">Metal-binding</keyword>
<keyword id="KW-0547">Nucleotide-binding</keyword>
<keyword id="KW-0597">Phosphoprotein</keyword>
<keyword id="KW-0677">Repeat</keyword>
<keyword id="KW-1278">Translocase</keyword>
<keyword id="KW-0812">Transmembrane</keyword>
<keyword id="KW-1133">Transmembrane helix</keyword>
<keyword id="KW-0813">Transport</keyword>
<organism>
    <name type="scientific">Staphylococcus aureus (strain COL)</name>
    <dbReference type="NCBI Taxonomy" id="93062"/>
    <lineage>
        <taxon>Bacteria</taxon>
        <taxon>Bacillati</taxon>
        <taxon>Bacillota</taxon>
        <taxon>Bacilli</taxon>
        <taxon>Bacillales</taxon>
        <taxon>Staphylococcaceae</taxon>
        <taxon>Staphylococcus</taxon>
    </lineage>
</organism>
<proteinExistence type="inferred from homology"/>
<reference key="1">
    <citation type="journal article" date="2005" name="J. Bacteriol.">
        <title>Insights on evolution of virulence and resistance from the complete genome analysis of an early methicillin-resistant Staphylococcus aureus strain and a biofilm-producing methicillin-resistant Staphylococcus epidermidis strain.</title>
        <authorList>
            <person name="Gill S.R."/>
            <person name="Fouts D.E."/>
            <person name="Archer G.L."/>
            <person name="Mongodin E.F."/>
            <person name="DeBoy R.T."/>
            <person name="Ravel J."/>
            <person name="Paulsen I.T."/>
            <person name="Kolonay J.F."/>
            <person name="Brinkac L.M."/>
            <person name="Beanan M.J."/>
            <person name="Dodson R.J."/>
            <person name="Daugherty S.C."/>
            <person name="Madupu R."/>
            <person name="Angiuoli S.V."/>
            <person name="Durkin A.S."/>
            <person name="Haft D.H."/>
            <person name="Vamathevan J.J."/>
            <person name="Khouri H."/>
            <person name="Utterback T.R."/>
            <person name="Lee C."/>
            <person name="Dimitrov G."/>
            <person name="Jiang L."/>
            <person name="Qin H."/>
            <person name="Weidman J."/>
            <person name="Tran K."/>
            <person name="Kang K.H."/>
            <person name="Hance I.R."/>
            <person name="Nelson K.E."/>
            <person name="Fraser C.M."/>
        </authorList>
    </citation>
    <scope>NUCLEOTIDE SEQUENCE [LARGE SCALE GENOMIC DNA]</scope>
    <source>
        <strain>COL</strain>
    </source>
</reference>
<feature type="chain" id="PRO_0000350584" description="Copper-exporting P-type ATPase">
    <location>
        <begin position="1"/>
        <end position="802"/>
    </location>
</feature>
<feature type="transmembrane region" description="Helical" evidence="2">
    <location>
        <begin position="161"/>
        <end position="181"/>
    </location>
</feature>
<feature type="transmembrane region" description="Helical" evidence="2">
    <location>
        <begin position="192"/>
        <end position="212"/>
    </location>
</feature>
<feature type="transmembrane region" description="Helical" evidence="2">
    <location>
        <begin position="224"/>
        <end position="244"/>
    </location>
</feature>
<feature type="transmembrane region" description="Helical" evidence="2">
    <location>
        <begin position="256"/>
        <end position="276"/>
    </location>
</feature>
<feature type="transmembrane region" description="Helical" evidence="2">
    <location>
        <begin position="411"/>
        <end position="431"/>
    </location>
</feature>
<feature type="transmembrane region" description="Helical" evidence="2">
    <location>
        <begin position="438"/>
        <end position="458"/>
    </location>
</feature>
<feature type="transmembrane region" description="Helical" evidence="2">
    <location>
        <begin position="748"/>
        <end position="767"/>
    </location>
</feature>
<feature type="transmembrane region" description="Helical" evidence="2">
    <location>
        <begin position="771"/>
        <end position="790"/>
    </location>
</feature>
<feature type="domain" description="HMA 1" evidence="3">
    <location>
        <begin position="5"/>
        <end position="70"/>
    </location>
</feature>
<feature type="domain" description="HMA 2" evidence="3">
    <location>
        <begin position="72"/>
        <end position="138"/>
    </location>
</feature>
<feature type="active site" description="4-aspartylphosphate intermediate" evidence="1">
    <location>
        <position position="495"/>
    </location>
</feature>
<feature type="binding site" evidence="3">
    <location>
        <position position="16"/>
    </location>
    <ligand>
        <name>Cu(+)</name>
        <dbReference type="ChEBI" id="CHEBI:49552"/>
        <label>1</label>
    </ligand>
</feature>
<feature type="binding site" evidence="3">
    <location>
        <position position="19"/>
    </location>
    <ligand>
        <name>Cu(+)</name>
        <dbReference type="ChEBI" id="CHEBI:49552"/>
        <label>1</label>
    </ligand>
</feature>
<feature type="binding site" evidence="3">
    <location>
        <position position="83"/>
    </location>
    <ligand>
        <name>Cu(+)</name>
        <dbReference type="ChEBI" id="CHEBI:49552"/>
        <label>2</label>
    </ligand>
</feature>
<feature type="binding site" evidence="3">
    <location>
        <position position="86"/>
    </location>
    <ligand>
        <name>Cu(+)</name>
        <dbReference type="ChEBI" id="CHEBI:49552"/>
        <label>2</label>
    </ligand>
</feature>
<feature type="binding site">
    <location>
        <position position="690"/>
    </location>
    <ligand>
        <name>Mg(2+)</name>
        <dbReference type="ChEBI" id="CHEBI:18420"/>
    </ligand>
</feature>
<feature type="binding site">
    <location>
        <position position="694"/>
    </location>
    <ligand>
        <name>Mg(2+)</name>
        <dbReference type="ChEBI" id="CHEBI:18420"/>
    </ligand>
</feature>
<evidence type="ECO:0000250" key="1"/>
<evidence type="ECO:0000255" key="2"/>
<evidence type="ECO:0000255" key="3">
    <source>
        <dbReference type="PROSITE-ProRule" id="PRU00280"/>
    </source>
</evidence>
<evidence type="ECO:0000305" key="4"/>
<name>COPA_STAAC</name>
<dbReference type="EC" id="7.2.2.8"/>
<dbReference type="EMBL" id="CP000046">
    <property type="protein sequence ID" value="AAW38574.1"/>
    <property type="molecule type" value="Genomic_DNA"/>
</dbReference>
<dbReference type="RefSeq" id="WP_000024127.1">
    <property type="nucleotide sequence ID" value="NZ_JBGOFO010000001.1"/>
</dbReference>
<dbReference type="SMR" id="Q5HCZ3"/>
<dbReference type="KEGG" id="sac:SACOL2572"/>
<dbReference type="HOGENOM" id="CLU_001771_0_3_9"/>
<dbReference type="Proteomes" id="UP000000530">
    <property type="component" value="Chromosome"/>
</dbReference>
<dbReference type="GO" id="GO:0005886">
    <property type="term" value="C:plasma membrane"/>
    <property type="evidence" value="ECO:0007669"/>
    <property type="project" value="UniProtKB-SubCell"/>
</dbReference>
<dbReference type="GO" id="GO:0005524">
    <property type="term" value="F:ATP binding"/>
    <property type="evidence" value="ECO:0007669"/>
    <property type="project" value="UniProtKB-KW"/>
</dbReference>
<dbReference type="GO" id="GO:0016887">
    <property type="term" value="F:ATP hydrolysis activity"/>
    <property type="evidence" value="ECO:0007669"/>
    <property type="project" value="InterPro"/>
</dbReference>
<dbReference type="GO" id="GO:0005507">
    <property type="term" value="F:copper ion binding"/>
    <property type="evidence" value="ECO:0007669"/>
    <property type="project" value="InterPro"/>
</dbReference>
<dbReference type="GO" id="GO:0043682">
    <property type="term" value="F:P-type divalent copper transporter activity"/>
    <property type="evidence" value="ECO:0007669"/>
    <property type="project" value="TreeGrafter"/>
</dbReference>
<dbReference type="GO" id="GO:0140581">
    <property type="term" value="F:P-type monovalent copper transporter activity"/>
    <property type="evidence" value="ECO:0007669"/>
    <property type="project" value="UniProtKB-EC"/>
</dbReference>
<dbReference type="GO" id="GO:0055070">
    <property type="term" value="P:copper ion homeostasis"/>
    <property type="evidence" value="ECO:0007669"/>
    <property type="project" value="TreeGrafter"/>
</dbReference>
<dbReference type="CDD" id="cd00371">
    <property type="entry name" value="HMA"/>
    <property type="match status" value="2"/>
</dbReference>
<dbReference type="CDD" id="cd02094">
    <property type="entry name" value="P-type_ATPase_Cu-like"/>
    <property type="match status" value="1"/>
</dbReference>
<dbReference type="FunFam" id="3.40.1110.10:FF:000038">
    <property type="entry name" value="Copper-exporting P-type ATPase"/>
    <property type="match status" value="1"/>
</dbReference>
<dbReference type="FunFam" id="3.40.1110.10:FF:000049">
    <property type="entry name" value="Copper-exporting P-type ATPase"/>
    <property type="match status" value="1"/>
</dbReference>
<dbReference type="FunFam" id="2.70.150.10:FF:000020">
    <property type="entry name" value="Copper-exporting P-type ATPase A"/>
    <property type="match status" value="1"/>
</dbReference>
<dbReference type="FunFam" id="3.30.70.100:FF:000005">
    <property type="entry name" value="Copper-exporting P-type ATPase A"/>
    <property type="match status" value="2"/>
</dbReference>
<dbReference type="FunFam" id="3.40.50.1000:FF:000144">
    <property type="entry name" value="copper-transporting ATPase 1 isoform X2"/>
    <property type="match status" value="1"/>
</dbReference>
<dbReference type="Gene3D" id="3.30.70.100">
    <property type="match status" value="2"/>
</dbReference>
<dbReference type="Gene3D" id="3.40.1110.10">
    <property type="entry name" value="Calcium-transporting ATPase, cytoplasmic domain N"/>
    <property type="match status" value="2"/>
</dbReference>
<dbReference type="Gene3D" id="2.70.150.10">
    <property type="entry name" value="Calcium-transporting ATPase, cytoplasmic transduction domain A"/>
    <property type="match status" value="1"/>
</dbReference>
<dbReference type="Gene3D" id="3.40.50.1000">
    <property type="entry name" value="HAD superfamily/HAD-like"/>
    <property type="match status" value="1"/>
</dbReference>
<dbReference type="InterPro" id="IPR023299">
    <property type="entry name" value="ATPase_P-typ_cyto_dom_N"/>
</dbReference>
<dbReference type="InterPro" id="IPR018303">
    <property type="entry name" value="ATPase_P-typ_P_site"/>
</dbReference>
<dbReference type="InterPro" id="IPR023298">
    <property type="entry name" value="ATPase_P-typ_TM_dom_sf"/>
</dbReference>
<dbReference type="InterPro" id="IPR008250">
    <property type="entry name" value="ATPase_P-typ_transduc_dom_A_sf"/>
</dbReference>
<dbReference type="InterPro" id="IPR036412">
    <property type="entry name" value="HAD-like_sf"/>
</dbReference>
<dbReference type="InterPro" id="IPR023214">
    <property type="entry name" value="HAD_sf"/>
</dbReference>
<dbReference type="InterPro" id="IPR017969">
    <property type="entry name" value="Heavy-metal-associated_CS"/>
</dbReference>
<dbReference type="InterPro" id="IPR006122">
    <property type="entry name" value="HMA_Cu_ion-bd"/>
</dbReference>
<dbReference type="InterPro" id="IPR006121">
    <property type="entry name" value="HMA_dom"/>
</dbReference>
<dbReference type="InterPro" id="IPR036163">
    <property type="entry name" value="HMA_dom_sf"/>
</dbReference>
<dbReference type="InterPro" id="IPR027256">
    <property type="entry name" value="P-typ_ATPase_IB"/>
</dbReference>
<dbReference type="InterPro" id="IPR001757">
    <property type="entry name" value="P_typ_ATPase"/>
</dbReference>
<dbReference type="InterPro" id="IPR044492">
    <property type="entry name" value="P_typ_ATPase_HD_dom"/>
</dbReference>
<dbReference type="NCBIfam" id="TIGR01511">
    <property type="entry name" value="ATPase-IB1_Cu"/>
    <property type="match status" value="1"/>
</dbReference>
<dbReference type="NCBIfam" id="TIGR01525">
    <property type="entry name" value="ATPase-IB_hvy"/>
    <property type="match status" value="1"/>
</dbReference>
<dbReference type="NCBIfam" id="TIGR01494">
    <property type="entry name" value="ATPase_P-type"/>
    <property type="match status" value="1"/>
</dbReference>
<dbReference type="NCBIfam" id="TIGR00003">
    <property type="entry name" value="copper ion binding protein"/>
    <property type="match status" value="2"/>
</dbReference>
<dbReference type="PANTHER" id="PTHR43520">
    <property type="entry name" value="ATP7, ISOFORM B"/>
    <property type="match status" value="1"/>
</dbReference>
<dbReference type="PANTHER" id="PTHR43520:SF8">
    <property type="entry name" value="P-TYPE CU(+) TRANSPORTER"/>
    <property type="match status" value="1"/>
</dbReference>
<dbReference type="Pfam" id="PF00122">
    <property type="entry name" value="E1-E2_ATPase"/>
    <property type="match status" value="1"/>
</dbReference>
<dbReference type="Pfam" id="PF00403">
    <property type="entry name" value="HMA"/>
    <property type="match status" value="2"/>
</dbReference>
<dbReference type="Pfam" id="PF00702">
    <property type="entry name" value="Hydrolase"/>
    <property type="match status" value="1"/>
</dbReference>
<dbReference type="PRINTS" id="PR00119">
    <property type="entry name" value="CATATPASE"/>
</dbReference>
<dbReference type="PRINTS" id="PR00943">
    <property type="entry name" value="CUATPASE"/>
</dbReference>
<dbReference type="SFLD" id="SFLDS00003">
    <property type="entry name" value="Haloacid_Dehalogenase"/>
    <property type="match status" value="1"/>
</dbReference>
<dbReference type="SFLD" id="SFLDF00027">
    <property type="entry name" value="p-type_atpase"/>
    <property type="match status" value="1"/>
</dbReference>
<dbReference type="SUPFAM" id="SSF81653">
    <property type="entry name" value="Calcium ATPase, transduction domain A"/>
    <property type="match status" value="1"/>
</dbReference>
<dbReference type="SUPFAM" id="SSF81665">
    <property type="entry name" value="Calcium ATPase, transmembrane domain M"/>
    <property type="match status" value="1"/>
</dbReference>
<dbReference type="SUPFAM" id="SSF56784">
    <property type="entry name" value="HAD-like"/>
    <property type="match status" value="1"/>
</dbReference>
<dbReference type="SUPFAM" id="SSF55008">
    <property type="entry name" value="HMA, heavy metal-associated domain"/>
    <property type="match status" value="2"/>
</dbReference>
<dbReference type="PROSITE" id="PS00154">
    <property type="entry name" value="ATPASE_E1_E2"/>
    <property type="match status" value="1"/>
</dbReference>
<dbReference type="PROSITE" id="PS01047">
    <property type="entry name" value="HMA_1"/>
    <property type="match status" value="2"/>
</dbReference>
<dbReference type="PROSITE" id="PS50846">
    <property type="entry name" value="HMA_2"/>
    <property type="match status" value="2"/>
</dbReference>
<comment type="function">
    <text evidence="1">Involved in copper export.</text>
</comment>
<comment type="catalytic activity">
    <reaction>
        <text>Cu(+)(in) + ATP + H2O = Cu(+)(out) + ADP + phosphate + H(+)</text>
        <dbReference type="Rhea" id="RHEA:25792"/>
        <dbReference type="ChEBI" id="CHEBI:15377"/>
        <dbReference type="ChEBI" id="CHEBI:15378"/>
        <dbReference type="ChEBI" id="CHEBI:30616"/>
        <dbReference type="ChEBI" id="CHEBI:43474"/>
        <dbReference type="ChEBI" id="CHEBI:49552"/>
        <dbReference type="ChEBI" id="CHEBI:456216"/>
        <dbReference type="EC" id="7.2.2.8"/>
    </reaction>
</comment>
<comment type="subcellular location">
    <subcellularLocation>
        <location evidence="1">Cell membrane</location>
        <topology evidence="1">Multi-pass membrane protein</topology>
    </subcellularLocation>
</comment>
<comment type="similarity">
    <text evidence="4">Belongs to the cation transport ATPase (P-type) (TC 3.A.3) family. Type IB subfamily.</text>
</comment>
<gene>
    <name type="primary">copA</name>
    <name type="ordered locus">SACOL2572</name>
</gene>
<sequence length="802" mass="86744">MANTKKTTLDITGMTCAACSNRIEKKLNKLDDVNAQVNLTTEKATVEYNPDQHDVQEFINTIQHLGYGVAVETVELDITGMTCAACSSRIEKVLNKMDGVQNATVNLTTEQAKVDYYPEETDADKLVTRIQKLGYDASIKDNNKDQTSRKAEALQHKLIKLIISAVLSLPLLMLMFVHLFNMHIPALFTNPWFQFILATPVQFIIGWQFYVGAYKNLRNGGANMDVLVAVGTSAAYFYSIYEMVRWLNGSTTQPHLYFETSAVLITLILFGKYLEARAKSQTTNALGELLSLQAKEARILKDGNEVMIPLNEVHVGDTLIVKPGEKIPVDGKIIKGMTAIDESMLTGESIPVEKNVDDTVIGSTMNKNGTITMTATKVGGDTALANIIKVVEEAQSSKAPIQRLADIISGYFVPIVVGIALLTFIVWITLVTPGTFEPALVASISVLVIACPCALGLATPTSIMVGTGRAAENGILFKGGEFVERTHQIDTIVLDKTGTITNGRPVVTDYHGDNQTLQLLATAEKDSEHPLAEAIVNYAKEKQLILTETTTFKAVPGHGIEATIDHHHILVGNRKLMADNDISLPKHISDDLTHYERDGKTAMLIAVNYSLTGIIAVADTVKDHAKDAIKQLHDMGIEVAMLTGDNKNTAQAIAKQVGIDTVIADILPEEKAAQIAKLQQQGKKVAMVGDGVNDAPALVKADIGIAIGTGTEVAIEAADITILGGDLMLIPKAIYASKATIRNIRQNLFWAFGYNIAGIPIAALGLLAPWVAGAAMALSSVSVVTNALRLKKMRLEPRRKDA</sequence>